<organism>
    <name type="scientific">Caldicellulosiruptor saccharolyticus (strain ATCC 43494 / DSM 8903 / Tp8T 6331)</name>
    <dbReference type="NCBI Taxonomy" id="351627"/>
    <lineage>
        <taxon>Bacteria</taxon>
        <taxon>Bacillati</taxon>
        <taxon>Bacillota</taxon>
        <taxon>Bacillota incertae sedis</taxon>
        <taxon>Caldicellulosiruptorales</taxon>
        <taxon>Caldicellulosiruptoraceae</taxon>
        <taxon>Caldicellulosiruptor</taxon>
    </lineage>
</organism>
<comment type="function">
    <text evidence="1">Converts GTP to 7,8-dihydroneopterin triphosphate.</text>
</comment>
<comment type="catalytic activity">
    <reaction evidence="1">
        <text>GTP + H2O = 7,8-dihydroneopterin 3'-triphosphate + formate + H(+)</text>
        <dbReference type="Rhea" id="RHEA:17473"/>
        <dbReference type="ChEBI" id="CHEBI:15377"/>
        <dbReference type="ChEBI" id="CHEBI:15378"/>
        <dbReference type="ChEBI" id="CHEBI:15740"/>
        <dbReference type="ChEBI" id="CHEBI:37565"/>
        <dbReference type="ChEBI" id="CHEBI:58462"/>
        <dbReference type="EC" id="3.5.4.16"/>
    </reaction>
</comment>
<comment type="pathway">
    <text evidence="1">Cofactor biosynthesis; 7,8-dihydroneopterin triphosphate biosynthesis; 7,8-dihydroneopterin triphosphate from GTP: step 1/1.</text>
</comment>
<comment type="similarity">
    <text evidence="1">Belongs to the GTP cyclohydrolase IV family.</text>
</comment>
<keyword id="KW-0378">Hydrolase</keyword>
<name>GCH4_CALS8</name>
<dbReference type="EC" id="3.5.4.16" evidence="1"/>
<dbReference type="EMBL" id="CP000679">
    <property type="protein sequence ID" value="ABP65859.1"/>
    <property type="molecule type" value="Genomic_DNA"/>
</dbReference>
<dbReference type="RefSeq" id="WP_011915824.1">
    <property type="nucleotide sequence ID" value="NC_009437.1"/>
</dbReference>
<dbReference type="SMR" id="A4XG24"/>
<dbReference type="STRING" id="351627.Csac_0211"/>
<dbReference type="KEGG" id="csc:Csac_0211"/>
<dbReference type="eggNOG" id="COG1469">
    <property type="taxonomic scope" value="Bacteria"/>
</dbReference>
<dbReference type="HOGENOM" id="CLU_062816_1_1_9"/>
<dbReference type="OrthoDB" id="9774824at2"/>
<dbReference type="UniPathway" id="UPA00848">
    <property type="reaction ID" value="UER00151"/>
</dbReference>
<dbReference type="Proteomes" id="UP000000256">
    <property type="component" value="Chromosome"/>
</dbReference>
<dbReference type="GO" id="GO:0003934">
    <property type="term" value="F:GTP cyclohydrolase I activity"/>
    <property type="evidence" value="ECO:0007669"/>
    <property type="project" value="UniProtKB-UniRule"/>
</dbReference>
<dbReference type="GO" id="GO:0046654">
    <property type="term" value="P:tetrahydrofolate biosynthetic process"/>
    <property type="evidence" value="ECO:0007669"/>
    <property type="project" value="UniProtKB-UniRule"/>
</dbReference>
<dbReference type="Gene3D" id="3.10.270.10">
    <property type="entry name" value="Urate Oxidase"/>
    <property type="match status" value="1"/>
</dbReference>
<dbReference type="HAMAP" id="MF_01527_B">
    <property type="entry name" value="GTP_cyclohydrol_B"/>
    <property type="match status" value="1"/>
</dbReference>
<dbReference type="InterPro" id="IPR022838">
    <property type="entry name" value="GTP_cyclohydrolase_FolE2"/>
</dbReference>
<dbReference type="InterPro" id="IPR003801">
    <property type="entry name" value="GTP_cyclohydrolase_FolE2/MptA"/>
</dbReference>
<dbReference type="NCBIfam" id="NF010200">
    <property type="entry name" value="PRK13674.1-1"/>
    <property type="match status" value="1"/>
</dbReference>
<dbReference type="PANTHER" id="PTHR36445">
    <property type="entry name" value="GTP CYCLOHYDROLASE MPTA"/>
    <property type="match status" value="1"/>
</dbReference>
<dbReference type="PANTHER" id="PTHR36445:SF1">
    <property type="entry name" value="GTP CYCLOHYDROLASE MPTA"/>
    <property type="match status" value="1"/>
</dbReference>
<dbReference type="Pfam" id="PF02649">
    <property type="entry name" value="GCHY-1"/>
    <property type="match status" value="1"/>
</dbReference>
<feature type="chain" id="PRO_1000068664" description="GTP cyclohydrolase FolE2">
    <location>
        <begin position="1"/>
        <end position="256"/>
    </location>
</feature>
<feature type="site" description="May be catalytically important" evidence="1">
    <location>
        <position position="143"/>
    </location>
</feature>
<protein>
    <recommendedName>
        <fullName evidence="1">GTP cyclohydrolase FolE2</fullName>
        <ecNumber evidence="1">3.5.4.16</ecNumber>
    </recommendedName>
</protein>
<sequence length="256" mass="29628">MIDVQSQKDLRGIAIQKVGIKDLNWPIVVMDRANKTQTTIAKITAAAELKGDMRGTHMSRFIEAIDELNVVGPKEIERLLDRIKEKLDSQKAYVRFDFPYFINKRTPVTETLAPLKVDCYFEAEKGEKFDLKVGVIVPVHTLCPCSKEISEYGAHNQRAYVTIEVKMRRFMWIEELVEIAESSASCPLYSILKRPDEKWVTERAYQNPRFVEDLLREVVVKISGDKRIKWYKVFVESIESIHNHNAFAYIEGENTK</sequence>
<gene>
    <name evidence="1" type="primary">folE2</name>
    <name type="ordered locus">Csac_0211</name>
</gene>
<evidence type="ECO:0000255" key="1">
    <source>
        <dbReference type="HAMAP-Rule" id="MF_01527"/>
    </source>
</evidence>
<reference key="1">
    <citation type="submission" date="2007-04" db="EMBL/GenBank/DDBJ databases">
        <title>Genome sequence of the thermophilic hydrogen-producing bacterium Caldicellulosiruptor saccharolyticus DSM 8903.</title>
        <authorList>
            <person name="Copeland A."/>
            <person name="Lucas S."/>
            <person name="Lapidus A."/>
            <person name="Barry K."/>
            <person name="Detter J.C."/>
            <person name="Glavina del Rio T."/>
            <person name="Hammon N."/>
            <person name="Israni S."/>
            <person name="Dalin E."/>
            <person name="Tice H."/>
            <person name="Pitluck S."/>
            <person name="Kiss H."/>
            <person name="Brettin T."/>
            <person name="Bruce D."/>
            <person name="Han C."/>
            <person name="Schmutz J."/>
            <person name="Larimer F."/>
            <person name="Land M."/>
            <person name="Hauser L."/>
            <person name="Kyrpides N."/>
            <person name="Lykidis A."/>
            <person name="van de Werken H.J.G."/>
            <person name="Verhaart M.R.A."/>
            <person name="VanFossen A.L."/>
            <person name="Lewis D.L."/>
            <person name="Nichols J.D."/>
            <person name="Goorissen H.P."/>
            <person name="van Niel E.W.J."/>
            <person name="Stams F.J.M."/>
            <person name="Willquist K.U."/>
            <person name="Ward D.E."/>
            <person name="van der Oost J."/>
            <person name="Kelly R.M."/>
            <person name="Kengen S.M.W."/>
            <person name="Richardson P."/>
        </authorList>
    </citation>
    <scope>NUCLEOTIDE SEQUENCE [LARGE SCALE GENOMIC DNA]</scope>
    <source>
        <strain>ATCC 43494 / DSM 8903 / Tp8T 6331</strain>
    </source>
</reference>
<proteinExistence type="inferred from homology"/>
<accession>A4XG24</accession>